<proteinExistence type="inferred from homology"/>
<name>GLPK_CARHZ</name>
<sequence length="500" mass="55606">MTKKYVLALDQGTTSCRAILFDRDSNIVGVAQKEFTQHYPKPGWVEHDPEEIWSTQYGVIAELMARYNVNPEEIAAIGITNQRETTVVWDRNTGKPVYNAIVWQCRRTAGICDELKAKGLEEKVRYKTGLVIDAYFSGTKIKWILDNVEGAREKAERGELLFGTIDTWLVWKLTGGKVHVTDYSNASRTMIYNIRELKWDEELLAELGIPASMLPEVKPSSYVYGETDPNVFFGHAIPISGIAGDQQAALFGQTCFEPGMAKNTYGTGCFMLMNTGDKVYESKNGLLTTIAWGIDGKVEYALEGSIFIAGAVIQWLRDGLKLIESAADSEYFASKVPDTGGVYIVPAFAGLGAPYWDMRARGTIVGLTRGTNKYHLVRAALESMAYQTRDVLSAMEADSGIKLQALKVDGGAVANNLLMQFQADILGVPVERPVNIETTAMGAAYLAGLAVGFWADKQELVAKYKVSRRFEPTMDEQTREKLYKGWQRAVTRAREWEVEE</sequence>
<comment type="function">
    <text evidence="1">Key enzyme in the regulation of glycerol uptake and metabolism. Catalyzes the phosphorylation of glycerol to yield sn-glycerol 3-phosphate.</text>
</comment>
<comment type="catalytic activity">
    <reaction evidence="1">
        <text>glycerol + ATP = sn-glycerol 3-phosphate + ADP + H(+)</text>
        <dbReference type="Rhea" id="RHEA:21644"/>
        <dbReference type="ChEBI" id="CHEBI:15378"/>
        <dbReference type="ChEBI" id="CHEBI:17754"/>
        <dbReference type="ChEBI" id="CHEBI:30616"/>
        <dbReference type="ChEBI" id="CHEBI:57597"/>
        <dbReference type="ChEBI" id="CHEBI:456216"/>
        <dbReference type="EC" id="2.7.1.30"/>
    </reaction>
</comment>
<comment type="activity regulation">
    <text evidence="1">Activated by phosphorylation and inhibited by fructose 1,6-bisphosphate (FBP).</text>
</comment>
<comment type="pathway">
    <text evidence="1">Polyol metabolism; glycerol degradation via glycerol kinase pathway; sn-glycerol 3-phosphate from glycerol: step 1/1.</text>
</comment>
<comment type="subunit">
    <text evidence="1">Homotetramer and homodimer (in equilibrium).</text>
</comment>
<comment type="similarity">
    <text evidence="1">Belongs to the FGGY kinase family.</text>
</comment>
<accession>Q3AB25</accession>
<reference key="1">
    <citation type="journal article" date="2005" name="PLoS Genet.">
        <title>Life in hot carbon monoxide: the complete genome sequence of Carboxydothermus hydrogenoformans Z-2901.</title>
        <authorList>
            <person name="Wu M."/>
            <person name="Ren Q."/>
            <person name="Durkin A.S."/>
            <person name="Daugherty S.C."/>
            <person name="Brinkac L.M."/>
            <person name="Dodson R.J."/>
            <person name="Madupu R."/>
            <person name="Sullivan S.A."/>
            <person name="Kolonay J.F."/>
            <person name="Nelson W.C."/>
            <person name="Tallon L.J."/>
            <person name="Jones K.M."/>
            <person name="Ulrich L.E."/>
            <person name="Gonzalez J.M."/>
            <person name="Zhulin I.B."/>
            <person name="Robb F.T."/>
            <person name="Eisen J.A."/>
        </authorList>
    </citation>
    <scope>NUCLEOTIDE SEQUENCE [LARGE SCALE GENOMIC DNA]</scope>
    <source>
        <strain>ATCC BAA-161 / DSM 6008 / Z-2901</strain>
    </source>
</reference>
<keyword id="KW-0067">ATP-binding</keyword>
<keyword id="KW-0319">Glycerol metabolism</keyword>
<keyword id="KW-0418">Kinase</keyword>
<keyword id="KW-0547">Nucleotide-binding</keyword>
<keyword id="KW-1185">Reference proteome</keyword>
<keyword id="KW-0808">Transferase</keyword>
<feature type="chain" id="PRO_1000020716" description="Glycerol kinase">
    <location>
        <begin position="1"/>
        <end position="500"/>
    </location>
</feature>
<feature type="binding site" evidence="1">
    <location>
        <position position="13"/>
    </location>
    <ligand>
        <name>ADP</name>
        <dbReference type="ChEBI" id="CHEBI:456216"/>
    </ligand>
</feature>
<feature type="binding site" evidence="1">
    <location>
        <position position="13"/>
    </location>
    <ligand>
        <name>ATP</name>
        <dbReference type="ChEBI" id="CHEBI:30616"/>
    </ligand>
</feature>
<feature type="binding site" evidence="1">
    <location>
        <position position="13"/>
    </location>
    <ligand>
        <name>sn-glycerol 3-phosphate</name>
        <dbReference type="ChEBI" id="CHEBI:57597"/>
    </ligand>
</feature>
<feature type="binding site" evidence="1">
    <location>
        <position position="14"/>
    </location>
    <ligand>
        <name>ATP</name>
        <dbReference type="ChEBI" id="CHEBI:30616"/>
    </ligand>
</feature>
<feature type="binding site" evidence="1">
    <location>
        <position position="15"/>
    </location>
    <ligand>
        <name>ATP</name>
        <dbReference type="ChEBI" id="CHEBI:30616"/>
    </ligand>
</feature>
<feature type="binding site" evidence="1">
    <location>
        <position position="17"/>
    </location>
    <ligand>
        <name>ADP</name>
        <dbReference type="ChEBI" id="CHEBI:456216"/>
    </ligand>
</feature>
<feature type="binding site" evidence="1">
    <location>
        <position position="83"/>
    </location>
    <ligand>
        <name>glycerol</name>
        <dbReference type="ChEBI" id="CHEBI:17754"/>
    </ligand>
</feature>
<feature type="binding site" evidence="1">
    <location>
        <position position="83"/>
    </location>
    <ligand>
        <name>sn-glycerol 3-phosphate</name>
        <dbReference type="ChEBI" id="CHEBI:57597"/>
    </ligand>
</feature>
<feature type="binding site" evidence="1">
    <location>
        <position position="84"/>
    </location>
    <ligand>
        <name>glycerol</name>
        <dbReference type="ChEBI" id="CHEBI:17754"/>
    </ligand>
</feature>
<feature type="binding site" evidence="1">
    <location>
        <position position="84"/>
    </location>
    <ligand>
        <name>sn-glycerol 3-phosphate</name>
        <dbReference type="ChEBI" id="CHEBI:57597"/>
    </ligand>
</feature>
<feature type="binding site" evidence="1">
    <location>
        <position position="135"/>
    </location>
    <ligand>
        <name>glycerol</name>
        <dbReference type="ChEBI" id="CHEBI:17754"/>
    </ligand>
</feature>
<feature type="binding site" evidence="1">
    <location>
        <position position="135"/>
    </location>
    <ligand>
        <name>sn-glycerol 3-phosphate</name>
        <dbReference type="ChEBI" id="CHEBI:57597"/>
    </ligand>
</feature>
<feature type="binding site" evidence="1">
    <location>
        <position position="245"/>
    </location>
    <ligand>
        <name>glycerol</name>
        <dbReference type="ChEBI" id="CHEBI:17754"/>
    </ligand>
</feature>
<feature type="binding site" evidence="1">
    <location>
        <position position="245"/>
    </location>
    <ligand>
        <name>sn-glycerol 3-phosphate</name>
        <dbReference type="ChEBI" id="CHEBI:57597"/>
    </ligand>
</feature>
<feature type="binding site" evidence="1">
    <location>
        <position position="246"/>
    </location>
    <ligand>
        <name>glycerol</name>
        <dbReference type="ChEBI" id="CHEBI:17754"/>
    </ligand>
</feature>
<feature type="binding site" evidence="1">
    <location>
        <position position="267"/>
    </location>
    <ligand>
        <name>ADP</name>
        <dbReference type="ChEBI" id="CHEBI:456216"/>
    </ligand>
</feature>
<feature type="binding site" evidence="1">
    <location>
        <position position="267"/>
    </location>
    <ligand>
        <name>ATP</name>
        <dbReference type="ChEBI" id="CHEBI:30616"/>
    </ligand>
</feature>
<feature type="binding site" evidence="1">
    <location>
        <position position="310"/>
    </location>
    <ligand>
        <name>ADP</name>
        <dbReference type="ChEBI" id="CHEBI:456216"/>
    </ligand>
</feature>
<feature type="binding site" evidence="1">
    <location>
        <position position="310"/>
    </location>
    <ligand>
        <name>ATP</name>
        <dbReference type="ChEBI" id="CHEBI:30616"/>
    </ligand>
</feature>
<feature type="binding site" evidence="1">
    <location>
        <position position="314"/>
    </location>
    <ligand>
        <name>ATP</name>
        <dbReference type="ChEBI" id="CHEBI:30616"/>
    </ligand>
</feature>
<feature type="binding site" evidence="1">
    <location>
        <position position="411"/>
    </location>
    <ligand>
        <name>ADP</name>
        <dbReference type="ChEBI" id="CHEBI:456216"/>
    </ligand>
</feature>
<feature type="binding site" evidence="1">
    <location>
        <position position="411"/>
    </location>
    <ligand>
        <name>ATP</name>
        <dbReference type="ChEBI" id="CHEBI:30616"/>
    </ligand>
</feature>
<feature type="binding site" evidence="1">
    <location>
        <position position="415"/>
    </location>
    <ligand>
        <name>ADP</name>
        <dbReference type="ChEBI" id="CHEBI:456216"/>
    </ligand>
</feature>
<protein>
    <recommendedName>
        <fullName evidence="1">Glycerol kinase</fullName>
        <ecNumber evidence="1">2.7.1.30</ecNumber>
    </recommendedName>
    <alternativeName>
        <fullName evidence="1">ATP:glycerol 3-phosphotransferase</fullName>
    </alternativeName>
    <alternativeName>
        <fullName evidence="1">Glycerokinase</fullName>
        <shortName evidence="1">GK</shortName>
    </alternativeName>
</protein>
<gene>
    <name evidence="1" type="primary">glpK</name>
    <name type="ordered locus">CHY_1839</name>
</gene>
<organism>
    <name type="scientific">Carboxydothermus hydrogenoformans (strain ATCC BAA-161 / DSM 6008 / Z-2901)</name>
    <dbReference type="NCBI Taxonomy" id="246194"/>
    <lineage>
        <taxon>Bacteria</taxon>
        <taxon>Bacillati</taxon>
        <taxon>Bacillota</taxon>
        <taxon>Clostridia</taxon>
        <taxon>Thermoanaerobacterales</taxon>
        <taxon>Thermoanaerobacteraceae</taxon>
        <taxon>Carboxydothermus</taxon>
    </lineage>
</organism>
<dbReference type="EC" id="2.7.1.30" evidence="1"/>
<dbReference type="EMBL" id="CP000141">
    <property type="protein sequence ID" value="ABB15269.1"/>
    <property type="molecule type" value="Genomic_DNA"/>
</dbReference>
<dbReference type="RefSeq" id="WP_011344733.1">
    <property type="nucleotide sequence ID" value="NC_007503.1"/>
</dbReference>
<dbReference type="SMR" id="Q3AB25"/>
<dbReference type="FunCoup" id="Q3AB25">
    <property type="interactions" value="292"/>
</dbReference>
<dbReference type="STRING" id="246194.CHY_1839"/>
<dbReference type="KEGG" id="chy:CHY_1839"/>
<dbReference type="eggNOG" id="COG0554">
    <property type="taxonomic scope" value="Bacteria"/>
</dbReference>
<dbReference type="HOGENOM" id="CLU_009281_2_3_9"/>
<dbReference type="InParanoid" id="Q3AB25"/>
<dbReference type="OrthoDB" id="9805576at2"/>
<dbReference type="UniPathway" id="UPA00618">
    <property type="reaction ID" value="UER00672"/>
</dbReference>
<dbReference type="Proteomes" id="UP000002706">
    <property type="component" value="Chromosome"/>
</dbReference>
<dbReference type="GO" id="GO:0005829">
    <property type="term" value="C:cytosol"/>
    <property type="evidence" value="ECO:0007669"/>
    <property type="project" value="TreeGrafter"/>
</dbReference>
<dbReference type="GO" id="GO:0005524">
    <property type="term" value="F:ATP binding"/>
    <property type="evidence" value="ECO:0007669"/>
    <property type="project" value="UniProtKB-UniRule"/>
</dbReference>
<dbReference type="GO" id="GO:0004370">
    <property type="term" value="F:glycerol kinase activity"/>
    <property type="evidence" value="ECO:0000250"/>
    <property type="project" value="UniProtKB"/>
</dbReference>
<dbReference type="GO" id="GO:0019563">
    <property type="term" value="P:glycerol catabolic process"/>
    <property type="evidence" value="ECO:0007669"/>
    <property type="project" value="UniProtKB-UniRule"/>
</dbReference>
<dbReference type="GO" id="GO:0006071">
    <property type="term" value="P:glycerol metabolic process"/>
    <property type="evidence" value="ECO:0000250"/>
    <property type="project" value="UniProtKB"/>
</dbReference>
<dbReference type="GO" id="GO:0006072">
    <property type="term" value="P:glycerol-3-phosphate metabolic process"/>
    <property type="evidence" value="ECO:0007669"/>
    <property type="project" value="InterPro"/>
</dbReference>
<dbReference type="CDD" id="cd07786">
    <property type="entry name" value="FGGY_EcGK_like"/>
    <property type="match status" value="1"/>
</dbReference>
<dbReference type="FunFam" id="3.30.420.40:FF:000007">
    <property type="entry name" value="Glycerol kinase"/>
    <property type="match status" value="1"/>
</dbReference>
<dbReference type="FunFam" id="3.30.420.40:FF:000008">
    <property type="entry name" value="Glycerol kinase"/>
    <property type="match status" value="1"/>
</dbReference>
<dbReference type="Gene3D" id="3.30.420.40">
    <property type="match status" value="2"/>
</dbReference>
<dbReference type="HAMAP" id="MF_00186">
    <property type="entry name" value="Glycerol_kin"/>
    <property type="match status" value="1"/>
</dbReference>
<dbReference type="InterPro" id="IPR043129">
    <property type="entry name" value="ATPase_NBD"/>
</dbReference>
<dbReference type="InterPro" id="IPR000577">
    <property type="entry name" value="Carb_kinase_FGGY"/>
</dbReference>
<dbReference type="InterPro" id="IPR018483">
    <property type="entry name" value="Carb_kinase_FGGY_CS"/>
</dbReference>
<dbReference type="InterPro" id="IPR018485">
    <property type="entry name" value="FGGY_C"/>
</dbReference>
<dbReference type="InterPro" id="IPR018484">
    <property type="entry name" value="FGGY_N"/>
</dbReference>
<dbReference type="InterPro" id="IPR005999">
    <property type="entry name" value="Glycerol_kin"/>
</dbReference>
<dbReference type="NCBIfam" id="TIGR01311">
    <property type="entry name" value="glycerol_kin"/>
    <property type="match status" value="1"/>
</dbReference>
<dbReference type="NCBIfam" id="NF000756">
    <property type="entry name" value="PRK00047.1"/>
    <property type="match status" value="1"/>
</dbReference>
<dbReference type="PANTHER" id="PTHR10196:SF69">
    <property type="entry name" value="GLYCEROL KINASE"/>
    <property type="match status" value="1"/>
</dbReference>
<dbReference type="PANTHER" id="PTHR10196">
    <property type="entry name" value="SUGAR KINASE"/>
    <property type="match status" value="1"/>
</dbReference>
<dbReference type="Pfam" id="PF02782">
    <property type="entry name" value="FGGY_C"/>
    <property type="match status" value="1"/>
</dbReference>
<dbReference type="Pfam" id="PF00370">
    <property type="entry name" value="FGGY_N"/>
    <property type="match status" value="1"/>
</dbReference>
<dbReference type="PIRSF" id="PIRSF000538">
    <property type="entry name" value="GlpK"/>
    <property type="match status" value="1"/>
</dbReference>
<dbReference type="SUPFAM" id="SSF53067">
    <property type="entry name" value="Actin-like ATPase domain"/>
    <property type="match status" value="2"/>
</dbReference>
<dbReference type="PROSITE" id="PS00933">
    <property type="entry name" value="FGGY_KINASES_1"/>
    <property type="match status" value="1"/>
</dbReference>
<dbReference type="PROSITE" id="PS00445">
    <property type="entry name" value="FGGY_KINASES_2"/>
    <property type="match status" value="1"/>
</dbReference>
<evidence type="ECO:0000255" key="1">
    <source>
        <dbReference type="HAMAP-Rule" id="MF_00186"/>
    </source>
</evidence>